<evidence type="ECO:0000250" key="1"/>
<evidence type="ECO:0000255" key="2"/>
<evidence type="ECO:0000305" key="3"/>
<feature type="chain" id="PRO_0000246208" description="GPI ethanolamine phosphate transferase 1">
    <location>
        <begin position="1"/>
        <end position="981"/>
    </location>
</feature>
<feature type="topological domain" description="Cytoplasmic" evidence="2">
    <location>
        <begin position="1"/>
        <end position="6"/>
    </location>
</feature>
<feature type="transmembrane region" description="Helical" evidence="2">
    <location>
        <begin position="7"/>
        <end position="27"/>
    </location>
</feature>
<feature type="topological domain" description="Lumenal" evidence="2">
    <location>
        <begin position="28"/>
        <end position="464"/>
    </location>
</feature>
<feature type="transmembrane region" description="Helical" evidence="2">
    <location>
        <begin position="465"/>
        <end position="485"/>
    </location>
</feature>
<feature type="topological domain" description="Cytoplasmic" evidence="2">
    <location>
        <begin position="486"/>
        <end position="496"/>
    </location>
</feature>
<feature type="transmembrane region" description="Helical" evidence="2">
    <location>
        <begin position="497"/>
        <end position="517"/>
    </location>
</feature>
<feature type="topological domain" description="Lumenal" evidence="2">
    <location>
        <begin position="518"/>
        <end position="519"/>
    </location>
</feature>
<feature type="transmembrane region" description="Helical" evidence="2">
    <location>
        <begin position="520"/>
        <end position="540"/>
    </location>
</feature>
<feature type="topological domain" description="Cytoplasmic" evidence="2">
    <location>
        <begin position="541"/>
        <end position="560"/>
    </location>
</feature>
<feature type="transmembrane region" description="Helical" evidence="2">
    <location>
        <begin position="561"/>
        <end position="581"/>
    </location>
</feature>
<feature type="topological domain" description="Lumenal" evidence="2">
    <location>
        <begin position="582"/>
        <end position="587"/>
    </location>
</feature>
<feature type="transmembrane region" description="Helical" evidence="2">
    <location>
        <begin position="588"/>
        <end position="608"/>
    </location>
</feature>
<feature type="topological domain" description="Cytoplasmic" evidence="2">
    <location>
        <begin position="609"/>
        <end position="611"/>
    </location>
</feature>
<feature type="transmembrane region" description="Helical" evidence="2">
    <location>
        <begin position="612"/>
        <end position="632"/>
    </location>
</feature>
<feature type="topological domain" description="Lumenal" evidence="2">
    <location>
        <begin position="633"/>
        <end position="638"/>
    </location>
</feature>
<feature type="transmembrane region" description="Helical" evidence="2">
    <location>
        <begin position="639"/>
        <end position="659"/>
    </location>
</feature>
<feature type="topological domain" description="Cytoplasmic" evidence="2">
    <location>
        <begin position="660"/>
        <end position="681"/>
    </location>
</feature>
<feature type="transmembrane region" description="Helical" evidence="2">
    <location>
        <begin position="682"/>
        <end position="702"/>
    </location>
</feature>
<feature type="topological domain" description="Lumenal" evidence="2">
    <location>
        <begin position="703"/>
        <end position="708"/>
    </location>
</feature>
<feature type="transmembrane region" description="Helical" evidence="2">
    <location>
        <begin position="709"/>
        <end position="729"/>
    </location>
</feature>
<feature type="topological domain" description="Cytoplasmic" evidence="2">
    <location>
        <begin position="730"/>
        <end position="744"/>
    </location>
</feature>
<feature type="transmembrane region" description="Helical" evidence="2">
    <location>
        <begin position="745"/>
        <end position="767"/>
    </location>
</feature>
<feature type="topological domain" description="Lumenal" evidence="2">
    <location>
        <begin position="768"/>
        <end position="819"/>
    </location>
</feature>
<feature type="transmembrane region" description="Helical" evidence="2">
    <location>
        <begin position="820"/>
        <end position="840"/>
    </location>
</feature>
<feature type="topological domain" description="Cytoplasmic" evidence="2">
    <location>
        <begin position="841"/>
        <end position="862"/>
    </location>
</feature>
<feature type="transmembrane region" description="Helical" evidence="2">
    <location>
        <begin position="863"/>
        <end position="883"/>
    </location>
</feature>
<feature type="topological domain" description="Lumenal" evidence="2">
    <location>
        <begin position="884"/>
        <end position="892"/>
    </location>
</feature>
<feature type="transmembrane region" description="Helical" evidence="2">
    <location>
        <begin position="893"/>
        <end position="913"/>
    </location>
</feature>
<feature type="topological domain" description="Cytoplasmic" evidence="2">
    <location>
        <begin position="914"/>
        <end position="929"/>
    </location>
</feature>
<feature type="transmembrane region" description="Helical" evidence="2">
    <location>
        <begin position="930"/>
        <end position="950"/>
    </location>
</feature>
<feature type="topological domain" description="Lumenal" evidence="2">
    <location>
        <begin position="951"/>
        <end position="981"/>
    </location>
</feature>
<feature type="glycosylation site" description="N-linked (GlcNAc...) asparagine" evidence="2">
    <location>
        <position position="148"/>
    </location>
</feature>
<feature type="glycosylation site" description="N-linked (GlcNAc...) asparagine" evidence="2">
    <location>
        <position position="211"/>
    </location>
</feature>
<feature type="glycosylation site" description="N-linked (GlcNAc...) asparagine" evidence="2">
    <location>
        <position position="295"/>
    </location>
</feature>
<comment type="function">
    <text evidence="1">Ethanolamine phosphate transferase involved in glycosylphosphatidylinositol-anchor biosynthesis. Transfers ethanolamine phosphate to the first alpha-1,4-linked mannose of the glycosylphosphatidylinositol precursor of GPI-anchor (By similarity).</text>
</comment>
<comment type="pathway">
    <text>Glycolipid biosynthesis; glycosylphosphatidylinositol-anchor biosynthesis.</text>
</comment>
<comment type="subcellular location">
    <subcellularLocation>
        <location evidence="1">Endoplasmic reticulum membrane</location>
        <topology evidence="1">Multi-pass membrane protein</topology>
    </subcellularLocation>
</comment>
<comment type="similarity">
    <text evidence="3">Belongs to the PIGG/PIGN/PIGO family. PIGN subfamily.</text>
</comment>
<dbReference type="EC" id="2.-.-.-"/>
<dbReference type="EMBL" id="DS231663">
    <property type="protein sequence ID" value="ESU07302.1"/>
    <property type="molecule type" value="Genomic_DNA"/>
</dbReference>
<dbReference type="EMBL" id="HG970332">
    <property type="protein sequence ID" value="CEF74141.1"/>
    <property type="molecule type" value="Genomic_DNA"/>
</dbReference>
<dbReference type="RefSeq" id="XP_011317787.1">
    <property type="nucleotide sequence ID" value="XM_011319485.1"/>
</dbReference>
<dbReference type="SMR" id="Q4ILH3"/>
<dbReference type="FunCoup" id="Q4ILH3">
    <property type="interactions" value="514"/>
</dbReference>
<dbReference type="STRING" id="229533.Q4ILH3"/>
<dbReference type="GlyCosmos" id="Q4ILH3">
    <property type="glycosylation" value="3 sites, No reported glycans"/>
</dbReference>
<dbReference type="GeneID" id="23549346"/>
<dbReference type="KEGG" id="fgr:FGSG_01935"/>
<dbReference type="VEuPathDB" id="FungiDB:FGRAMPH1_01G04669"/>
<dbReference type="eggNOG" id="KOG2124">
    <property type="taxonomic scope" value="Eukaryota"/>
</dbReference>
<dbReference type="HOGENOM" id="CLU_007676_0_0_1"/>
<dbReference type="InParanoid" id="Q4ILH3"/>
<dbReference type="OrthoDB" id="95387at110618"/>
<dbReference type="UniPathway" id="UPA00196"/>
<dbReference type="Proteomes" id="UP000070720">
    <property type="component" value="Chromosome 1"/>
</dbReference>
<dbReference type="GO" id="GO:0005789">
    <property type="term" value="C:endoplasmic reticulum membrane"/>
    <property type="evidence" value="ECO:0007669"/>
    <property type="project" value="UniProtKB-SubCell"/>
</dbReference>
<dbReference type="GO" id="GO:0051377">
    <property type="term" value="F:mannose-ethanolamine phosphotransferase activity"/>
    <property type="evidence" value="ECO:0007669"/>
    <property type="project" value="InterPro"/>
</dbReference>
<dbReference type="GO" id="GO:0071555">
    <property type="term" value="P:cell wall organization"/>
    <property type="evidence" value="ECO:0007669"/>
    <property type="project" value="UniProtKB-KW"/>
</dbReference>
<dbReference type="GO" id="GO:0006506">
    <property type="term" value="P:GPI anchor biosynthetic process"/>
    <property type="evidence" value="ECO:0007669"/>
    <property type="project" value="UniProtKB-UniPathway"/>
</dbReference>
<dbReference type="CDD" id="cd16020">
    <property type="entry name" value="GPI_EPT_1"/>
    <property type="match status" value="1"/>
</dbReference>
<dbReference type="FunFam" id="3.40.720.10:FF:000015">
    <property type="entry name" value="GPI ethanolamine phosphate transferase 1"/>
    <property type="match status" value="1"/>
</dbReference>
<dbReference type="Gene3D" id="3.40.720.10">
    <property type="entry name" value="Alkaline Phosphatase, subunit A"/>
    <property type="match status" value="1"/>
</dbReference>
<dbReference type="InterPro" id="IPR017850">
    <property type="entry name" value="Alkaline_phosphatase_core_sf"/>
</dbReference>
<dbReference type="InterPro" id="IPR007070">
    <property type="entry name" value="GPI_EtnP_transferase_1"/>
</dbReference>
<dbReference type="InterPro" id="IPR017852">
    <property type="entry name" value="GPI_EtnP_transferase_1_C"/>
</dbReference>
<dbReference type="InterPro" id="IPR002591">
    <property type="entry name" value="Phosphodiest/P_Trfase"/>
</dbReference>
<dbReference type="InterPro" id="IPR037671">
    <property type="entry name" value="PIGN_N"/>
</dbReference>
<dbReference type="PANTHER" id="PTHR12250:SF0">
    <property type="entry name" value="GPI ETHANOLAMINE PHOSPHATE TRANSFERASE 1"/>
    <property type="match status" value="1"/>
</dbReference>
<dbReference type="PANTHER" id="PTHR12250">
    <property type="entry name" value="PHOSPHATIDYLINOSITOL GLYCAN, CLASS N"/>
    <property type="match status" value="1"/>
</dbReference>
<dbReference type="Pfam" id="PF01663">
    <property type="entry name" value="Phosphodiest"/>
    <property type="match status" value="1"/>
</dbReference>
<dbReference type="Pfam" id="PF04987">
    <property type="entry name" value="PigN"/>
    <property type="match status" value="1"/>
</dbReference>
<dbReference type="SUPFAM" id="SSF53649">
    <property type="entry name" value="Alkaline phosphatase-like"/>
    <property type="match status" value="1"/>
</dbReference>
<accession>Q4ILH3</accession>
<accession>A0A098D853</accession>
<accession>A0A0E0RSB6</accession>
<accession>V6R072</accession>
<gene>
    <name type="primary">MCD4</name>
    <name type="ORF">FGRRES_01935</name>
    <name type="ORF">FGSG_01935</name>
</gene>
<sequence>MAGSSRIGFMAIAVAFHLVYILSIFDIYFVSPIVTGMKLFGVERPHESPKAPADRLVLFVGDGLRADKAFQAHPEPYPESDQDLVPRHLAPYLRSRVLEHGTFGVSHTRVPTESRPGHVALIAGLYEDVSAVATGWKMNPVNFDSVFNRSRHTWSWGSPDILPMFQHGAVPGRVDAFAYGAELEDFSKDATELDYWVFDHVKDFFAAAATNETLNTALREDKVVFFLHLLGLDTTGHSYRPYSKEYLHNIKVVDQGVKEIVELIERFYGDDRTAFVFTADHGMSDWGSHGDGHPNNTRTPLISWGSGVAAPELHPGSIAPGHDELSSDWNLDHVRRHDVAQADVAALMSYLIGTEFPANGVGQLPLNFLSASIKEKAEASLANAQVILEQYRVKEENKRNVELRYQPYGQLSDGNLDPESRISHIRSLIEAGSFEEAIEESDALMSIGLQGLRYLQTYDWLFLRALITIGYLGWMAYATTTVLSLYVVKESMSPQRTLLGSAFFLSLLVALYSSFIISKSPPAYYLYAFFPVLFWEEVYARRANVAKGFQALFGHVKSGGAVVALVFNVVLYLGVIQSLALAYIHREILTGLFVLGAFWPMTQGISFLRSHLFLSMLWFFSCLAMSTFTLLPAMKVEDIPLIMAGGGLMTFVGLAYLVLEDFILSDVSSSKTKLKRLHTSRTLLGIQVGLIILAMLVTHSSATSLQAKLGLPKGNQIVGWFVLVTSLLMPLAYRLQPNSHYMHRLAIIFLTCAPTFVILTISYEGLFYVAFSITLLSWVRLEYAVDAFTQEKAKKQATVAGSQQHTPSTFRPLSLSDARIALFFMVLLQSAFFSTGNIASISSFSLESVSRLIPVFDPFSQGALLILKIIIPFFLISANLGVLNKRLGVAPSAIFMVVLTASDVLTLYFFWVVKDEGSWLEIGSTITHFAIASFLCVFVAALEFVSAAFIAGIEVEDTKSAALTSASTKADEKVPPVAGAE</sequence>
<name>MCD4_GIBZE</name>
<proteinExistence type="inferred from homology"/>
<keyword id="KW-0961">Cell wall biogenesis/degradation</keyword>
<keyword id="KW-0256">Endoplasmic reticulum</keyword>
<keyword id="KW-0325">Glycoprotein</keyword>
<keyword id="KW-0337">GPI-anchor biosynthesis</keyword>
<keyword id="KW-0472">Membrane</keyword>
<keyword id="KW-1185">Reference proteome</keyword>
<keyword id="KW-0808">Transferase</keyword>
<keyword id="KW-0812">Transmembrane</keyword>
<keyword id="KW-1133">Transmembrane helix</keyword>
<reference key="1">
    <citation type="journal article" date="2007" name="Science">
        <title>The Fusarium graminearum genome reveals a link between localized polymorphism and pathogen specialization.</title>
        <authorList>
            <person name="Cuomo C.A."/>
            <person name="Gueldener U."/>
            <person name="Xu J.-R."/>
            <person name="Trail F."/>
            <person name="Turgeon B.G."/>
            <person name="Di Pietro A."/>
            <person name="Walton J.D."/>
            <person name="Ma L.-J."/>
            <person name="Baker S.E."/>
            <person name="Rep M."/>
            <person name="Adam G."/>
            <person name="Antoniw J."/>
            <person name="Baldwin T."/>
            <person name="Calvo S.E."/>
            <person name="Chang Y.-L."/>
            <person name="DeCaprio D."/>
            <person name="Gale L.R."/>
            <person name="Gnerre S."/>
            <person name="Goswami R.S."/>
            <person name="Hammond-Kosack K."/>
            <person name="Harris L.J."/>
            <person name="Hilburn K."/>
            <person name="Kennell J.C."/>
            <person name="Kroken S."/>
            <person name="Magnuson J.K."/>
            <person name="Mannhaupt G."/>
            <person name="Mauceli E.W."/>
            <person name="Mewes H.-W."/>
            <person name="Mitterbauer R."/>
            <person name="Muehlbauer G."/>
            <person name="Muensterkoetter M."/>
            <person name="Nelson D."/>
            <person name="O'Donnell K."/>
            <person name="Ouellet T."/>
            <person name="Qi W."/>
            <person name="Quesneville H."/>
            <person name="Roncero M.I.G."/>
            <person name="Seong K.-Y."/>
            <person name="Tetko I.V."/>
            <person name="Urban M."/>
            <person name="Waalwijk C."/>
            <person name="Ward T.J."/>
            <person name="Yao J."/>
            <person name="Birren B.W."/>
            <person name="Kistler H.C."/>
        </authorList>
    </citation>
    <scope>NUCLEOTIDE SEQUENCE [LARGE SCALE GENOMIC DNA]</scope>
    <source>
        <strain>ATCC MYA-4620 / CBS 123657 / FGSC 9075 / NRRL 31084 / PH-1</strain>
    </source>
</reference>
<reference key="2">
    <citation type="journal article" date="2010" name="Nature">
        <title>Comparative genomics reveals mobile pathogenicity chromosomes in Fusarium.</title>
        <authorList>
            <person name="Ma L.-J."/>
            <person name="van der Does H.C."/>
            <person name="Borkovich K.A."/>
            <person name="Coleman J.J."/>
            <person name="Daboussi M.-J."/>
            <person name="Di Pietro A."/>
            <person name="Dufresne M."/>
            <person name="Freitag M."/>
            <person name="Grabherr M."/>
            <person name="Henrissat B."/>
            <person name="Houterman P.M."/>
            <person name="Kang S."/>
            <person name="Shim W.-B."/>
            <person name="Woloshuk C."/>
            <person name="Xie X."/>
            <person name="Xu J.-R."/>
            <person name="Antoniw J."/>
            <person name="Baker S.E."/>
            <person name="Bluhm B.H."/>
            <person name="Breakspear A."/>
            <person name="Brown D.W."/>
            <person name="Butchko R.A.E."/>
            <person name="Chapman S."/>
            <person name="Coulson R."/>
            <person name="Coutinho P.M."/>
            <person name="Danchin E.G.J."/>
            <person name="Diener A."/>
            <person name="Gale L.R."/>
            <person name="Gardiner D.M."/>
            <person name="Goff S."/>
            <person name="Hammond-Kosack K.E."/>
            <person name="Hilburn K."/>
            <person name="Hua-Van A."/>
            <person name="Jonkers W."/>
            <person name="Kazan K."/>
            <person name="Kodira C.D."/>
            <person name="Koehrsen M."/>
            <person name="Kumar L."/>
            <person name="Lee Y.-H."/>
            <person name="Li L."/>
            <person name="Manners J.M."/>
            <person name="Miranda-Saavedra D."/>
            <person name="Mukherjee M."/>
            <person name="Park G."/>
            <person name="Park J."/>
            <person name="Park S.-Y."/>
            <person name="Proctor R.H."/>
            <person name="Regev A."/>
            <person name="Ruiz-Roldan M.C."/>
            <person name="Sain D."/>
            <person name="Sakthikumar S."/>
            <person name="Sykes S."/>
            <person name="Schwartz D.C."/>
            <person name="Turgeon B.G."/>
            <person name="Wapinski I."/>
            <person name="Yoder O."/>
            <person name="Young S."/>
            <person name="Zeng Q."/>
            <person name="Zhou S."/>
            <person name="Galagan J."/>
            <person name="Cuomo C.A."/>
            <person name="Kistler H.C."/>
            <person name="Rep M."/>
        </authorList>
    </citation>
    <scope>GENOME REANNOTATION</scope>
    <source>
        <strain>ATCC MYA-4620 / CBS 123657 / FGSC 9075 / NRRL 31084 / PH-1</strain>
    </source>
</reference>
<reference key="3">
    <citation type="journal article" date="2015" name="BMC Genomics">
        <title>The completed genome sequence of the pathogenic ascomycete fungus Fusarium graminearum.</title>
        <authorList>
            <person name="King R."/>
            <person name="Urban M."/>
            <person name="Hammond-Kosack M.C.U."/>
            <person name="Hassani-Pak K."/>
            <person name="Hammond-Kosack K.E."/>
        </authorList>
    </citation>
    <scope>NUCLEOTIDE SEQUENCE [LARGE SCALE GENOMIC DNA]</scope>
    <source>
        <strain>ATCC MYA-4620 / CBS 123657 / FGSC 9075 / NRRL 31084 / PH-1</strain>
    </source>
</reference>
<protein>
    <recommendedName>
        <fullName>GPI ethanolamine phosphate transferase 1</fullName>
        <ecNumber>2.-.-.-</ecNumber>
    </recommendedName>
</protein>
<organism>
    <name type="scientific">Gibberella zeae (strain ATCC MYA-4620 / CBS 123657 / FGSC 9075 / NRRL 31084 / PH-1)</name>
    <name type="common">Wheat head blight fungus</name>
    <name type="synonym">Fusarium graminearum</name>
    <dbReference type="NCBI Taxonomy" id="229533"/>
    <lineage>
        <taxon>Eukaryota</taxon>
        <taxon>Fungi</taxon>
        <taxon>Dikarya</taxon>
        <taxon>Ascomycota</taxon>
        <taxon>Pezizomycotina</taxon>
        <taxon>Sordariomycetes</taxon>
        <taxon>Hypocreomycetidae</taxon>
        <taxon>Hypocreales</taxon>
        <taxon>Nectriaceae</taxon>
        <taxon>Fusarium</taxon>
    </lineage>
</organism>